<reference key="1">
    <citation type="journal article" date="2007" name="PLoS Genet.">
        <title>Patterns and implications of gene gain and loss in the evolution of Prochlorococcus.</title>
        <authorList>
            <person name="Kettler G.C."/>
            <person name="Martiny A.C."/>
            <person name="Huang K."/>
            <person name="Zucker J."/>
            <person name="Coleman M.L."/>
            <person name="Rodrigue S."/>
            <person name="Chen F."/>
            <person name="Lapidus A."/>
            <person name="Ferriera S."/>
            <person name="Johnson J."/>
            <person name="Steglich C."/>
            <person name="Church G.M."/>
            <person name="Richardson P."/>
            <person name="Chisholm S.W."/>
        </authorList>
    </citation>
    <scope>NUCLEOTIDE SEQUENCE [LARGE SCALE GENOMIC DNA]</scope>
    <source>
        <strain>MIT 9303</strain>
    </source>
</reference>
<feature type="chain" id="PRO_1000055436" description="Large ribosomal subunit protein uL13">
    <location>
        <begin position="1"/>
        <end position="150"/>
    </location>
</feature>
<feature type="region of interest" description="Disordered" evidence="2">
    <location>
        <begin position="129"/>
        <end position="150"/>
    </location>
</feature>
<feature type="compositionally biased region" description="Polar residues" evidence="2">
    <location>
        <begin position="136"/>
        <end position="150"/>
    </location>
</feature>
<evidence type="ECO:0000255" key="1">
    <source>
        <dbReference type="HAMAP-Rule" id="MF_01366"/>
    </source>
</evidence>
<evidence type="ECO:0000256" key="2">
    <source>
        <dbReference type="SAM" id="MobiDB-lite"/>
    </source>
</evidence>
<evidence type="ECO:0000305" key="3"/>
<organism>
    <name type="scientific">Prochlorococcus marinus (strain MIT 9303)</name>
    <dbReference type="NCBI Taxonomy" id="59922"/>
    <lineage>
        <taxon>Bacteria</taxon>
        <taxon>Bacillati</taxon>
        <taxon>Cyanobacteriota</taxon>
        <taxon>Cyanophyceae</taxon>
        <taxon>Synechococcales</taxon>
        <taxon>Prochlorococcaceae</taxon>
        <taxon>Prochlorococcus</taxon>
    </lineage>
</organism>
<protein>
    <recommendedName>
        <fullName evidence="1">Large ribosomal subunit protein uL13</fullName>
    </recommendedName>
    <alternativeName>
        <fullName evidence="3">50S ribosomal protein L13</fullName>
    </alternativeName>
</protein>
<gene>
    <name evidence="1" type="primary">rplM</name>
    <name evidence="1" type="synonym">rpl13</name>
    <name type="ordered locus">P9303_23291</name>
</gene>
<comment type="function">
    <text evidence="1">This protein is one of the early assembly proteins of the 50S ribosomal subunit, although it is not seen to bind rRNA by itself. It is important during the early stages of 50S assembly.</text>
</comment>
<comment type="subunit">
    <text evidence="1">Part of the 50S ribosomal subunit.</text>
</comment>
<comment type="similarity">
    <text evidence="1">Belongs to the universal ribosomal protein uL13 family.</text>
</comment>
<proteinExistence type="inferred from homology"/>
<dbReference type="EMBL" id="CP000554">
    <property type="protein sequence ID" value="ABM79064.1"/>
    <property type="molecule type" value="Genomic_DNA"/>
</dbReference>
<dbReference type="RefSeq" id="WP_011131125.1">
    <property type="nucleotide sequence ID" value="NC_008820.1"/>
</dbReference>
<dbReference type="SMR" id="A2CC54"/>
<dbReference type="STRING" id="59922.P9303_23291"/>
<dbReference type="KEGG" id="pmf:P9303_23291"/>
<dbReference type="HOGENOM" id="CLU_082184_2_2_3"/>
<dbReference type="BioCyc" id="PMAR59922:G1G80-2046-MONOMER"/>
<dbReference type="Proteomes" id="UP000002274">
    <property type="component" value="Chromosome"/>
</dbReference>
<dbReference type="GO" id="GO:0022625">
    <property type="term" value="C:cytosolic large ribosomal subunit"/>
    <property type="evidence" value="ECO:0007669"/>
    <property type="project" value="TreeGrafter"/>
</dbReference>
<dbReference type="GO" id="GO:0003729">
    <property type="term" value="F:mRNA binding"/>
    <property type="evidence" value="ECO:0007669"/>
    <property type="project" value="TreeGrafter"/>
</dbReference>
<dbReference type="GO" id="GO:0003735">
    <property type="term" value="F:structural constituent of ribosome"/>
    <property type="evidence" value="ECO:0007669"/>
    <property type="project" value="InterPro"/>
</dbReference>
<dbReference type="GO" id="GO:0017148">
    <property type="term" value="P:negative regulation of translation"/>
    <property type="evidence" value="ECO:0007669"/>
    <property type="project" value="TreeGrafter"/>
</dbReference>
<dbReference type="GO" id="GO:0006412">
    <property type="term" value="P:translation"/>
    <property type="evidence" value="ECO:0007669"/>
    <property type="project" value="UniProtKB-UniRule"/>
</dbReference>
<dbReference type="CDD" id="cd00392">
    <property type="entry name" value="Ribosomal_L13"/>
    <property type="match status" value="1"/>
</dbReference>
<dbReference type="FunFam" id="3.90.1180.10:FF:000001">
    <property type="entry name" value="50S ribosomal protein L13"/>
    <property type="match status" value="1"/>
</dbReference>
<dbReference type="Gene3D" id="3.90.1180.10">
    <property type="entry name" value="Ribosomal protein L13"/>
    <property type="match status" value="1"/>
</dbReference>
<dbReference type="HAMAP" id="MF_01366">
    <property type="entry name" value="Ribosomal_uL13"/>
    <property type="match status" value="1"/>
</dbReference>
<dbReference type="InterPro" id="IPR005822">
    <property type="entry name" value="Ribosomal_uL13"/>
</dbReference>
<dbReference type="InterPro" id="IPR005823">
    <property type="entry name" value="Ribosomal_uL13_bac-type"/>
</dbReference>
<dbReference type="InterPro" id="IPR023563">
    <property type="entry name" value="Ribosomal_uL13_CS"/>
</dbReference>
<dbReference type="InterPro" id="IPR036899">
    <property type="entry name" value="Ribosomal_uL13_sf"/>
</dbReference>
<dbReference type="NCBIfam" id="TIGR01066">
    <property type="entry name" value="rplM_bact"/>
    <property type="match status" value="1"/>
</dbReference>
<dbReference type="PANTHER" id="PTHR11545:SF2">
    <property type="entry name" value="LARGE RIBOSOMAL SUBUNIT PROTEIN UL13M"/>
    <property type="match status" value="1"/>
</dbReference>
<dbReference type="PANTHER" id="PTHR11545">
    <property type="entry name" value="RIBOSOMAL PROTEIN L13"/>
    <property type="match status" value="1"/>
</dbReference>
<dbReference type="Pfam" id="PF00572">
    <property type="entry name" value="Ribosomal_L13"/>
    <property type="match status" value="1"/>
</dbReference>
<dbReference type="PIRSF" id="PIRSF002181">
    <property type="entry name" value="Ribosomal_L13"/>
    <property type="match status" value="1"/>
</dbReference>
<dbReference type="SUPFAM" id="SSF52161">
    <property type="entry name" value="Ribosomal protein L13"/>
    <property type="match status" value="1"/>
</dbReference>
<dbReference type="PROSITE" id="PS00783">
    <property type="entry name" value="RIBOSOMAL_L13"/>
    <property type="match status" value="1"/>
</dbReference>
<keyword id="KW-0687">Ribonucleoprotein</keyword>
<keyword id="KW-0689">Ribosomal protein</keyword>
<accession>A2CC54</accession>
<name>RL13_PROM3</name>
<sequence length="150" mass="16816">MNKTSVPSIDSIERQWFLVDAENQTLGRLATEVASVLRGKNKPSFTPHLDTGDFVVVVNADKIRVSGNKANQKLYRRHSGRPGGMKVETFQALQDRLPERIVEKAIKGMLPHNALGRQLFRKLKVYRGPEHPHSAQRPQTLQLNPAASSQ</sequence>